<dbReference type="EMBL" id="AY845378">
    <property type="protein sequence ID" value="AAX56345.1"/>
    <property type="molecule type" value="Genomic_DNA"/>
</dbReference>
<dbReference type="EMBL" id="AY845366">
    <property type="protein sequence ID" value="AAX56345.1"/>
    <property type="status" value="JOINED"/>
    <property type="molecule type" value="Genomic_DNA"/>
</dbReference>
<dbReference type="EMBL" id="AY845367">
    <property type="protein sequence ID" value="AAX56345.1"/>
    <property type="status" value="JOINED"/>
    <property type="molecule type" value="Genomic_DNA"/>
</dbReference>
<dbReference type="EMBL" id="AY845368">
    <property type="protein sequence ID" value="AAX56345.1"/>
    <property type="status" value="JOINED"/>
    <property type="molecule type" value="Genomic_DNA"/>
</dbReference>
<dbReference type="EMBL" id="AY845369">
    <property type="protein sequence ID" value="AAX56345.1"/>
    <property type="status" value="JOINED"/>
    <property type="molecule type" value="Genomic_DNA"/>
</dbReference>
<dbReference type="EMBL" id="AY845370">
    <property type="protein sequence ID" value="AAX56345.1"/>
    <property type="status" value="JOINED"/>
    <property type="molecule type" value="Genomic_DNA"/>
</dbReference>
<dbReference type="EMBL" id="AY845371">
    <property type="protein sequence ID" value="AAX56345.1"/>
    <property type="status" value="JOINED"/>
    <property type="molecule type" value="Genomic_DNA"/>
</dbReference>
<dbReference type="EMBL" id="AY845372">
    <property type="protein sequence ID" value="AAX56345.1"/>
    <property type="status" value="JOINED"/>
    <property type="molecule type" value="Genomic_DNA"/>
</dbReference>
<dbReference type="EMBL" id="AY845373">
    <property type="protein sequence ID" value="AAX56345.1"/>
    <property type="status" value="JOINED"/>
    <property type="molecule type" value="Genomic_DNA"/>
</dbReference>
<dbReference type="EMBL" id="AY845374">
    <property type="protein sequence ID" value="AAX56345.1"/>
    <property type="status" value="JOINED"/>
    <property type="molecule type" value="Genomic_DNA"/>
</dbReference>
<dbReference type="EMBL" id="AY845375">
    <property type="protein sequence ID" value="AAX56345.1"/>
    <property type="status" value="JOINED"/>
    <property type="molecule type" value="Genomic_DNA"/>
</dbReference>
<dbReference type="EMBL" id="AY845376">
    <property type="protein sequence ID" value="AAX56345.1"/>
    <property type="status" value="JOINED"/>
    <property type="molecule type" value="Genomic_DNA"/>
</dbReference>
<dbReference type="EMBL" id="AY845377">
    <property type="protein sequence ID" value="AAX56345.1"/>
    <property type="status" value="JOINED"/>
    <property type="molecule type" value="Genomic_DNA"/>
</dbReference>
<dbReference type="SMR" id="Q50DM6"/>
<dbReference type="FunCoup" id="Q50DM6">
    <property type="interactions" value="82"/>
</dbReference>
<dbReference type="STRING" id="9593.ENSGGOP00000008255"/>
<dbReference type="MEROPS" id="P02.008"/>
<dbReference type="GlyCosmos" id="Q50DM6">
    <property type="glycosylation" value="7 sites, No reported glycans"/>
</dbReference>
<dbReference type="eggNOG" id="KOG4193">
    <property type="taxonomic scope" value="Eukaryota"/>
</dbReference>
<dbReference type="InParanoid" id="Q50DM6"/>
<dbReference type="Proteomes" id="UP000001519">
    <property type="component" value="Unplaced"/>
</dbReference>
<dbReference type="GO" id="GO:0005576">
    <property type="term" value="C:extracellular region"/>
    <property type="evidence" value="ECO:0007669"/>
    <property type="project" value="UniProtKB-SubCell"/>
</dbReference>
<dbReference type="GO" id="GO:0097451">
    <property type="term" value="C:glial limiting end-foot"/>
    <property type="evidence" value="ECO:0000250"/>
    <property type="project" value="UniProtKB"/>
</dbReference>
<dbReference type="GO" id="GO:0045121">
    <property type="term" value="C:membrane raft"/>
    <property type="evidence" value="ECO:0007669"/>
    <property type="project" value="UniProtKB-SubCell"/>
</dbReference>
<dbReference type="GO" id="GO:0005886">
    <property type="term" value="C:plasma membrane"/>
    <property type="evidence" value="ECO:0000318"/>
    <property type="project" value="GO_Central"/>
</dbReference>
<dbReference type="GO" id="GO:0005518">
    <property type="term" value="F:collagen binding"/>
    <property type="evidence" value="ECO:0000250"/>
    <property type="project" value="UniProtKB"/>
</dbReference>
<dbReference type="GO" id="GO:0050840">
    <property type="term" value="F:extracellular matrix binding"/>
    <property type="evidence" value="ECO:0000250"/>
    <property type="project" value="UniProtKB"/>
</dbReference>
<dbReference type="GO" id="GO:0004930">
    <property type="term" value="F:G protein-coupled receptor activity"/>
    <property type="evidence" value="ECO:0000250"/>
    <property type="project" value="UniProtKB"/>
</dbReference>
<dbReference type="GO" id="GO:0008201">
    <property type="term" value="F:heparin binding"/>
    <property type="evidence" value="ECO:0000250"/>
    <property type="project" value="UniProtKB"/>
</dbReference>
<dbReference type="GO" id="GO:0007189">
    <property type="term" value="P:adenylate cyclase-activating G protein-coupled receptor signaling pathway"/>
    <property type="evidence" value="ECO:0000318"/>
    <property type="project" value="GO_Central"/>
</dbReference>
<dbReference type="GO" id="GO:0001525">
    <property type="term" value="P:angiogenesis"/>
    <property type="evidence" value="ECO:0000250"/>
    <property type="project" value="UniProtKB"/>
</dbReference>
<dbReference type="GO" id="GO:0007155">
    <property type="term" value="P:cell adhesion"/>
    <property type="evidence" value="ECO:0000250"/>
    <property type="project" value="UniProtKB"/>
</dbReference>
<dbReference type="GO" id="GO:0016477">
    <property type="term" value="P:cell migration"/>
    <property type="evidence" value="ECO:0000250"/>
    <property type="project" value="UniProtKB"/>
</dbReference>
<dbReference type="GO" id="GO:0007166">
    <property type="term" value="P:cell surface receptor signaling pathway"/>
    <property type="evidence" value="ECO:0007669"/>
    <property type="project" value="InterPro"/>
</dbReference>
<dbReference type="GO" id="GO:0021801">
    <property type="term" value="P:cerebral cortex radial glia-guided migration"/>
    <property type="evidence" value="ECO:0000250"/>
    <property type="project" value="UniProtKB"/>
</dbReference>
<dbReference type="GO" id="GO:0021819">
    <property type="term" value="P:layer formation in cerebral cortex"/>
    <property type="evidence" value="ECO:0000250"/>
    <property type="project" value="UniProtKB"/>
</dbReference>
<dbReference type="GO" id="GO:0008285">
    <property type="term" value="P:negative regulation of cell population proliferation"/>
    <property type="evidence" value="ECO:0000250"/>
    <property type="project" value="UniProtKB"/>
</dbReference>
<dbReference type="GO" id="GO:0110076">
    <property type="term" value="P:negative regulation of ferroptosis"/>
    <property type="evidence" value="ECO:0000250"/>
    <property type="project" value="UniProtKB"/>
</dbReference>
<dbReference type="GO" id="GO:2001223">
    <property type="term" value="P:negative regulation of neuron migration"/>
    <property type="evidence" value="ECO:0000250"/>
    <property type="project" value="UniProtKB"/>
</dbReference>
<dbReference type="GO" id="GO:0070444">
    <property type="term" value="P:oligodendrocyte progenitor proliferation"/>
    <property type="evidence" value="ECO:0000250"/>
    <property type="project" value="UniProtKB"/>
</dbReference>
<dbReference type="GO" id="GO:0007200">
    <property type="term" value="P:phospholipase C-activating G protein-coupled receptor signaling pathway"/>
    <property type="evidence" value="ECO:0000250"/>
    <property type="project" value="UniProtKB"/>
</dbReference>
<dbReference type="GO" id="GO:0045785">
    <property type="term" value="P:positive regulation of cell adhesion"/>
    <property type="evidence" value="ECO:0000250"/>
    <property type="project" value="UniProtKB"/>
</dbReference>
<dbReference type="GO" id="GO:0035025">
    <property type="term" value="P:positive regulation of Rho protein signal transduction"/>
    <property type="evidence" value="ECO:0000250"/>
    <property type="project" value="UniProtKB"/>
</dbReference>
<dbReference type="GO" id="GO:1900748">
    <property type="term" value="P:positive regulation of vascular endothelial growth factor signaling pathway"/>
    <property type="evidence" value="ECO:0000250"/>
    <property type="project" value="UniProtKB"/>
</dbReference>
<dbReference type="GO" id="GO:1905806">
    <property type="term" value="P:regulation of synapse pruning"/>
    <property type="evidence" value="ECO:0000250"/>
    <property type="project" value="UniProtKB"/>
</dbReference>
<dbReference type="GO" id="GO:0007266">
    <property type="term" value="P:Rho protein signal transduction"/>
    <property type="evidence" value="ECO:0000250"/>
    <property type="project" value="UniProtKB"/>
</dbReference>
<dbReference type="GO" id="GO:0160221">
    <property type="term" value="P:Rho-activating G protein-coupled receptor signaling pathway"/>
    <property type="evidence" value="ECO:0000250"/>
    <property type="project" value="UniProtKB"/>
</dbReference>
<dbReference type="FunFam" id="2.60.220.50:FF:000014">
    <property type="entry name" value="Adhesion G-protein coupled receptor G1"/>
    <property type="match status" value="1"/>
</dbReference>
<dbReference type="FunFam" id="1.20.1070.10:FF:000117">
    <property type="entry name" value="adhesion G-protein coupled receptor G1"/>
    <property type="match status" value="1"/>
</dbReference>
<dbReference type="Gene3D" id="2.60.220.50">
    <property type="match status" value="1"/>
</dbReference>
<dbReference type="Gene3D" id="1.20.1070.10">
    <property type="entry name" value="Rhodopsin 7-helix transmembrane proteins"/>
    <property type="match status" value="1"/>
</dbReference>
<dbReference type="InterPro" id="IPR040950">
    <property type="entry name" value="ADGRG1_GAIN_A"/>
</dbReference>
<dbReference type="InterPro" id="IPR057244">
    <property type="entry name" value="GAIN_B"/>
</dbReference>
<dbReference type="InterPro" id="IPR046338">
    <property type="entry name" value="GAIN_dom_sf"/>
</dbReference>
<dbReference type="InterPro" id="IPR017981">
    <property type="entry name" value="GPCR_2-like_7TM"/>
</dbReference>
<dbReference type="InterPro" id="IPR000832">
    <property type="entry name" value="GPCR_2_secretin-like"/>
</dbReference>
<dbReference type="InterPro" id="IPR003910">
    <property type="entry name" value="GPR1/GPR3/GPR5"/>
</dbReference>
<dbReference type="InterPro" id="IPR000203">
    <property type="entry name" value="GPS"/>
</dbReference>
<dbReference type="InterPro" id="IPR040679">
    <property type="entry name" value="PLL"/>
</dbReference>
<dbReference type="PANTHER" id="PTHR12011">
    <property type="entry name" value="ADHESION G-PROTEIN COUPLED RECEPTOR"/>
    <property type="match status" value="1"/>
</dbReference>
<dbReference type="PANTHER" id="PTHR12011:SF318">
    <property type="entry name" value="ADHESION G-PROTEIN COUPLED RECEPTOR G1"/>
    <property type="match status" value="1"/>
</dbReference>
<dbReference type="Pfam" id="PF00002">
    <property type="entry name" value="7tm_2"/>
    <property type="match status" value="1"/>
</dbReference>
<dbReference type="Pfam" id="PF18619">
    <property type="entry name" value="GAIN_A"/>
    <property type="match status" value="1"/>
</dbReference>
<dbReference type="Pfam" id="PF01825">
    <property type="entry name" value="GPS"/>
    <property type="match status" value="1"/>
</dbReference>
<dbReference type="Pfam" id="PF18587">
    <property type="entry name" value="PLL"/>
    <property type="match status" value="1"/>
</dbReference>
<dbReference type="PRINTS" id="PR00249">
    <property type="entry name" value="GPCRSECRETIN"/>
</dbReference>
<dbReference type="PRINTS" id="PR01422">
    <property type="entry name" value="GPR56ORPHANR"/>
</dbReference>
<dbReference type="SMART" id="SM00303">
    <property type="entry name" value="GPS"/>
    <property type="match status" value="1"/>
</dbReference>
<dbReference type="PROSITE" id="PS50261">
    <property type="entry name" value="G_PROTEIN_RECEP_F2_4"/>
    <property type="match status" value="1"/>
</dbReference>
<dbReference type="PROSITE" id="PS50221">
    <property type="entry name" value="GAIN_B"/>
    <property type="match status" value="1"/>
</dbReference>
<proteinExistence type="inferred from homology"/>
<feature type="signal peptide" evidence="2">
    <location>
        <begin position="1"/>
        <end position="25"/>
    </location>
</feature>
<feature type="chain" id="PRO_0000012879" description="Adhesion G-protein coupled receptor G1">
    <location>
        <begin position="26"/>
        <end position="687"/>
    </location>
</feature>
<feature type="chain" id="PRO_0000423084" description="Adhesion G-protein coupled receptor G1, N-terminal fragment" evidence="2">
    <location>
        <begin position="26"/>
        <end position="382" status="uncertain"/>
    </location>
</feature>
<feature type="chain" id="PRO_0000423085" description="Adhesion G-protein coupled receptor G1, C-terminal fragment" evidence="2">
    <location>
        <begin position="383" status="uncertain"/>
        <end position="687"/>
    </location>
</feature>
<feature type="topological domain" description="Extracellular" evidence="3">
    <location>
        <begin position="26"/>
        <end position="402"/>
    </location>
</feature>
<feature type="transmembrane region" description="Helical; Name=1" evidence="3">
    <location>
        <begin position="403"/>
        <end position="423"/>
    </location>
</feature>
<feature type="topological domain" description="Cytoplasmic" evidence="3">
    <location>
        <begin position="424"/>
        <end position="442"/>
    </location>
</feature>
<feature type="transmembrane region" description="Helical; Name=2" evidence="3">
    <location>
        <begin position="443"/>
        <end position="463"/>
    </location>
</feature>
<feature type="topological domain" description="Extracellular" evidence="3">
    <location>
        <begin position="464"/>
        <end position="470"/>
    </location>
</feature>
<feature type="transmembrane region" description="Helical; Name=3" evidence="3">
    <location>
        <begin position="471"/>
        <end position="491"/>
    </location>
</feature>
<feature type="topological domain" description="Cytoplasmic" evidence="3">
    <location>
        <begin position="492"/>
        <end position="512"/>
    </location>
</feature>
<feature type="transmembrane region" description="Helical; Name=4" evidence="3">
    <location>
        <begin position="513"/>
        <end position="533"/>
    </location>
</feature>
<feature type="topological domain" description="Extracellular" evidence="3">
    <location>
        <begin position="534"/>
        <end position="570"/>
    </location>
</feature>
<feature type="transmembrane region" description="Helical; Name=5" evidence="3">
    <location>
        <begin position="571"/>
        <end position="591"/>
    </location>
</feature>
<feature type="topological domain" description="Cytoplasmic" evidence="3">
    <location>
        <begin position="592"/>
        <end position="603"/>
    </location>
</feature>
<feature type="transmembrane region" description="Helical; Name=6" evidence="3">
    <location>
        <begin position="604"/>
        <end position="624"/>
    </location>
</feature>
<feature type="topological domain" description="Extracellular" evidence="3">
    <location>
        <begin position="625"/>
        <end position="630"/>
    </location>
</feature>
<feature type="transmembrane region" description="Helical; Name=7" evidence="3">
    <location>
        <begin position="631"/>
        <end position="651"/>
    </location>
</feature>
<feature type="topological domain" description="Cytoplasmic" evidence="3">
    <location>
        <begin position="652"/>
        <end position="687"/>
    </location>
</feature>
<feature type="domain" description="GAIN-B" evidence="4">
    <location>
        <begin position="224"/>
        <end position="395"/>
    </location>
</feature>
<feature type="region of interest" description="GPS" evidence="4">
    <location>
        <begin position="346"/>
        <end position="395"/>
    </location>
</feature>
<feature type="region of interest" description="Stachel" evidence="2">
    <location>
        <begin position="384"/>
        <end position="397"/>
    </location>
</feature>
<feature type="region of interest" description="Disordered" evidence="5">
    <location>
        <begin position="664"/>
        <end position="687"/>
    </location>
</feature>
<feature type="compositionally biased region" description="Low complexity" evidence="5">
    <location>
        <begin position="678"/>
        <end position="687"/>
    </location>
</feature>
<feature type="binding site" evidence="2">
    <location>
        <begin position="26"/>
        <end position="33"/>
    </location>
    <ligand>
        <name>heparin</name>
        <dbReference type="ChEBI" id="CHEBI:28304"/>
    </ligand>
</feature>
<feature type="binding site" evidence="2">
    <location>
        <begin position="190"/>
        <end position="200"/>
    </location>
    <ligand>
        <name>heparin</name>
        <dbReference type="ChEBI" id="CHEBI:28304"/>
    </ligand>
</feature>
<feature type="site" description="Cleavage; by autolysis" evidence="4">
    <location>
        <begin position="382"/>
        <end position="383"/>
    </location>
</feature>
<feature type="glycosylation site" description="N-linked (GlcNAc...) asparagine" evidence="3">
    <location>
        <position position="39"/>
    </location>
</feature>
<feature type="glycosylation site" description="N-linked (GlcNAc...) asparagine" evidence="3">
    <location>
        <position position="148"/>
    </location>
</feature>
<feature type="glycosylation site" description="N-linked (GlcNAc...) asparagine" evidence="3">
    <location>
        <position position="171"/>
    </location>
</feature>
<feature type="glycosylation site" description="N-linked (GlcNAc...) asparagine" evidence="3">
    <location>
        <position position="234"/>
    </location>
</feature>
<feature type="glycosylation site" description="N-linked (GlcNAc...) asparagine" evidence="3">
    <location>
        <position position="303"/>
    </location>
</feature>
<feature type="glycosylation site" description="N-linked (GlcNAc...) asparagine" evidence="3">
    <location>
        <position position="324"/>
    </location>
</feature>
<feature type="glycosylation site" description="N-linked (GlcNAc...) asparagine" evidence="3">
    <location>
        <position position="341"/>
    </location>
</feature>
<feature type="disulfide bond" evidence="1">
    <location>
        <begin position="35"/>
        <end position="91"/>
    </location>
</feature>
<feature type="disulfide bond" evidence="1">
    <location>
        <begin position="121"/>
        <end position="177"/>
    </location>
</feature>
<feature type="disulfide bond" evidence="4">
    <location>
        <begin position="346"/>
        <end position="377"/>
    </location>
</feature>
<feature type="disulfide bond" evidence="4">
    <location>
        <begin position="366"/>
        <end position="379"/>
    </location>
</feature>
<name>AGRG1_GORGO</name>
<accession>Q50DM6</accession>
<sequence>MTAQSLLQTTLFLLSLLFLVQGAHGRGHREDFRFCSQRNQTHRSSLHYKPTADLRISIENSEEALTVHAPFPAARPASQSFPDPRGLYHFCLYWNRHAGRLHLLYGKHDFLLSDKASSLLCFQHQEESLAQGPPLLATSVTSWWSPQNVSLPSAASFTFSFHSPPHTAAHNASVDMCELKRDLQLLSQFLKHPQKASRRPSAAPARQQLQSLESKLTSVRFTGDTVSFEEDRINATVWKLQPTAGLQDLHIHSRQEEEQSEILEYSVLLPRTLFQRTKGRRGEAEKRLLLVDFSSQALFQDKNSSQVLGEKVLGIVVQNTKVANLTEPVVLTFQHQLQPKNVTLQCVFWVEDPTLSSPGHWSSAGCETVRRETQTSCFCNHLTYFAVLMVSSVEVDAVHKHYLSLLSYVGCVVSALACIVTIAAYLCSRRKPRDYTIKVHMNLLLAVFLLDTSFLLSEPVALTGSEAGCRASAIFLHFSLLACLSWMGLEGYNLYRLVVEVFGTYVPGYLLKLSAMGWGFPIFLVTLVALVDVDNYGPIILAVHRTPEGVIYPSMCWIRDSLVSYITNLGLFSLVFLFNMAMLATMVVQILRLRPHTQKWSHVLTLLGLSLVLGLPWALIFFSFASGTFQLVVLYLFSIITSFQGFLIFIWYWSMRLQARGGPSPLKSNSDSARLPISSGSTSSSRI</sequence>
<organism>
    <name type="scientific">Gorilla gorilla gorilla</name>
    <name type="common">Western lowland gorilla</name>
    <dbReference type="NCBI Taxonomy" id="9595"/>
    <lineage>
        <taxon>Eukaryota</taxon>
        <taxon>Metazoa</taxon>
        <taxon>Chordata</taxon>
        <taxon>Craniata</taxon>
        <taxon>Vertebrata</taxon>
        <taxon>Euteleostomi</taxon>
        <taxon>Mammalia</taxon>
        <taxon>Eutheria</taxon>
        <taxon>Euarchontoglires</taxon>
        <taxon>Primates</taxon>
        <taxon>Haplorrhini</taxon>
        <taxon>Catarrhini</taxon>
        <taxon>Hominidae</taxon>
        <taxon>Gorilla</taxon>
    </lineage>
</organism>
<comment type="function">
    <text evidence="1 2">Adhesion G-protein coupled receptor (aGPCR) for steroid hormone 17alpha-hydroxypregnenolone (17-OH), which is involved in cell adhesion and cell-cell interactions. Ligand binding causes a conformation change that triggers signaling via guanine nucleotide-binding proteins (G proteins) and modulates the activity of downstream effectors, such as RhoA pathway. ADGRG1 is coupled to G(12) and/or G(13) G proteins (GNA12 and GNA13, respectively) and mediates the activation Rho small GTPases (By similarity). Acts as a potent suppressor of ferroptosis: binding to 17-OH-binding initiates signaling that down-regulates CD36 and alleviates ferroptosis-induced liver injury. Ligand-binding also induces cell adhesion activity via association with proteins such as collagen III/COL3A1 and TGM2. Mediates cell matrix adhesion in developing neurons and hematopoietic stem cells (By similarity). Involved in cortical development, specifically in maintenance of the pial basement membrane integrity and in cortical lamination: association with COL3A1 in the developing brain inhibits neuronal migration via activation of the RhoA pathway (By similarity). Together with TGM2, acts as a regulator of myelination and myelin repair in oligodendrocyte precursor cells (By similarity). Acts as a hemostatic sensor of shear force: G protein-coupled receptor signaling is activated in response to shear force in platelets, promoting G(13) G protein signaling, and platelet shape change and aggregation in a COL3A1-dependent manner. Acts as an inhibitor of VEGFA production thereby inhibiting angiogenesis through a signaling pathway mediated by PRKCA (By similarity). Plays a role in the maintenance of hematopoietic stem cells in bone marrow niche. Plays an essential role in testis development (By similarity).</text>
</comment>
<comment type="activity regulation">
    <text evidence="2">Forms a heterodimer of 2 chains generated by proteolytic processing that remain associated through non-covalent interactions mediated by the GAIN-B domain. In the inactivated receptor, the Stachel sequence (also named stalk) is embedded in the GAIN-B domain, where it adopts a beta-strand conformation. On activation, the Stachel moves into the 7 transmembrane region and adopts a twisted hook-shaped configuration that forms contacts within the receptor, leading to coupling of a G-alpha protein, which activates signaling. The cleaved GAIN-B and N-terminal domains can then dissociate from the rest of the receptor.</text>
</comment>
<comment type="subunit">
    <text evidence="2">Heterodimer of 2 chains generated by proteolytic processing; the large extracellular N-terminal fragment (ADGRG1 NT) and the membrane-bound C-terminal fragment (ADGRG1-CT) predominantly remain associated and non-covalently linked. ADGRG1 NT self-associates in a trans-trans manner; the homophilic interaction enhances receptor signaling. Interacts with TGM2. Interacts with heparin; leading to the reduction of ADGRG1 shedding. Interacts with COL3A1. Part of a GPCR-tetraspanin complex at least consisting of ADGRG1, CD81, eventually CD9, and GNA11 in which CD81 is enhancing the association of ADGRG1 with GNA11.</text>
</comment>
<comment type="subcellular location">
    <subcellularLocation>
        <location evidence="2">Cell membrane</location>
        <topology evidence="2">Multi-pass membrane protein</topology>
    </subcellularLocation>
</comment>
<comment type="subcellular location">
    <molecule>Adhesion G-protein coupled receptor G1, N-terminal fragment</molecule>
    <subcellularLocation>
        <location evidence="2">Secreted</location>
    </subcellularLocation>
    <text evidence="2">Activation of the G protein-coupled receptor and interaction with COL3A1 leads to the release of ADGRG1 NT from the membrane.</text>
</comment>
<comment type="subcellular location">
    <molecule>Adhesion G-protein coupled receptor G1, C-terminal fragment</molecule>
    <subcellularLocation>
        <location evidence="2">Membrane raft</location>
    </subcellularLocation>
    <text evidence="2">Interaction with its ligand COL3A1 leads to the release of ADGRG1 NT from the membrane and triggers the association of ADGRG1 CT with lipid rafts.</text>
</comment>
<comment type="domain">
    <text evidence="2">The Stachel sequence (also named stalk) in the C-terminal part of the extracellular domain (ECD) functions as a tethered agonist. In the inactivated receptor, the Stachel sequence (also named stalk) is embedded in the GAIN-B domain, where it adopts a beta-strand conformation. On activation, the Stachel moves into the 7 transmembrane region and adopts a twisted hook-shaped configuration that forms contacts within the receptor, leading to coupling of a G-alpha protein, which activates signaling.</text>
</comment>
<comment type="PTM">
    <text evidence="2">Autoproteolytically cleaved into 2 fragments; the large extracellular N-terminal fragment (ADGRG1 NT) and the membrane-bound C-terminal fragment (ADGRG1 CT) predominantly remain associated and non-covalently linked. Shedding to yield the secreted ADGRG1 N-terminal fragment seems to involve metalloprotease(s).</text>
</comment>
<comment type="PTM">
    <text evidence="2">Ubiquitinated. Undergoes polyubiquitination upon activation.</text>
</comment>
<comment type="similarity">
    <text evidence="6">Belongs to the G-protein coupled receptor 2 family. LN-TM7 subfamily.</text>
</comment>
<evidence type="ECO:0000250" key="1">
    <source>
        <dbReference type="UniProtKB" id="Q8K209"/>
    </source>
</evidence>
<evidence type="ECO:0000250" key="2">
    <source>
        <dbReference type="UniProtKB" id="Q9Y653"/>
    </source>
</evidence>
<evidence type="ECO:0000255" key="3"/>
<evidence type="ECO:0000255" key="4">
    <source>
        <dbReference type="PROSITE-ProRule" id="PRU00098"/>
    </source>
</evidence>
<evidence type="ECO:0000256" key="5">
    <source>
        <dbReference type="SAM" id="MobiDB-lite"/>
    </source>
</evidence>
<evidence type="ECO:0000305" key="6"/>
<reference key="1">
    <citation type="submission" date="2004-12" db="EMBL/GenBank/DDBJ databases">
        <title>Detecting selection requires more than just human-chimpanzee-mouse trios.</title>
        <authorList>
            <person name="Piao X."/>
            <person name="Collura R.V."/>
            <person name="Lobell A."/>
            <person name="Bailey A.S."/>
            <person name="Walsh C.A."/>
            <person name="Ruvolo M."/>
        </authorList>
    </citation>
    <scope>NUCLEOTIDE SEQUENCE [GENOMIC DNA]</scope>
</reference>
<gene>
    <name type="primary">ADGRG1</name>
    <name type="synonym">GPR56</name>
</gene>
<keyword id="KW-0130">Cell adhesion</keyword>
<keyword id="KW-1003">Cell membrane</keyword>
<keyword id="KW-0217">Developmental protein</keyword>
<keyword id="KW-0221">Differentiation</keyword>
<keyword id="KW-1015">Disulfide bond</keyword>
<keyword id="KW-0297">G-protein coupled receptor</keyword>
<keyword id="KW-0325">Glycoprotein</keyword>
<keyword id="KW-0358">Heparin-binding</keyword>
<keyword id="KW-0472">Membrane</keyword>
<keyword id="KW-0524">Neurogenesis</keyword>
<keyword id="KW-0675">Receptor</keyword>
<keyword id="KW-1185">Reference proteome</keyword>
<keyword id="KW-0964">Secreted</keyword>
<keyword id="KW-0732">Signal</keyword>
<keyword id="KW-0807">Transducer</keyword>
<keyword id="KW-0812">Transmembrane</keyword>
<keyword id="KW-1133">Transmembrane helix</keyword>
<keyword id="KW-0832">Ubl conjugation</keyword>
<protein>
    <recommendedName>
        <fullName>Adhesion G-protein coupled receptor G1</fullName>
    </recommendedName>
    <alternativeName>
        <fullName>G-protein coupled receptor 56</fullName>
    </alternativeName>
    <component>
        <recommendedName>
            <fullName>Adhesion G-protein coupled receptor G1, N-terminal fragment</fullName>
        </recommendedName>
        <alternativeName>
            <fullName>ADGRG1 N-terminal fragment</fullName>
            <shortName>ADGRG1 NT</shortName>
        </alternativeName>
        <alternativeName>
            <fullName>GPR56 N-terminal fragment</fullName>
            <shortName>GPR56 NT</shortName>
            <shortName>GPR56(N)</shortName>
        </alternativeName>
        <alternativeName>
            <fullName>GPR56 extracellular subunit</fullName>
        </alternativeName>
        <alternativeName>
            <fullName>GPR56 subunit alpha</fullName>
        </alternativeName>
    </component>
    <component>
        <recommendedName>
            <fullName>Adhesion G-protein coupled receptor G1, C-terminal fragment</fullName>
        </recommendedName>
        <alternativeName>
            <fullName>ADGRG1 C-terminal fragment</fullName>
            <shortName>ADGRG1 CT</shortName>
        </alternativeName>
        <alternativeName>
            <fullName>GPR56 C-terminal fragment</fullName>
            <shortName>GPR56 CT</shortName>
            <shortName>GPR56(C)</shortName>
        </alternativeName>
        <alternativeName>
            <fullName>GPR56 seven-transmembrane subunit</fullName>
            <shortName>GPR56 7TM</shortName>
        </alternativeName>
        <alternativeName>
            <fullName>GPR56 subunit beta</fullName>
        </alternativeName>
    </component>
</protein>